<gene>
    <name type="primary">MEP1</name>
</gene>
<comment type="function">
    <text evidence="1">Secreted metalloproteinase probably acting as a virulence factor.</text>
</comment>
<comment type="cofactor">
    <cofactor evidence="1">
        <name>Zn(2+)</name>
        <dbReference type="ChEBI" id="CHEBI:29105"/>
    </cofactor>
    <text evidence="1">Binds 1 zinc ion per subunit.</text>
</comment>
<comment type="subcellular location">
    <subcellularLocation>
        <location evidence="1">Secreted</location>
    </subcellularLocation>
</comment>
<comment type="similarity">
    <text evidence="4">Belongs to the peptidase M36 family.</text>
</comment>
<keyword id="KW-0325">Glycoprotein</keyword>
<keyword id="KW-0378">Hydrolase</keyword>
<keyword id="KW-0479">Metal-binding</keyword>
<keyword id="KW-0482">Metalloprotease</keyword>
<keyword id="KW-0645">Protease</keyword>
<keyword id="KW-0964">Secreted</keyword>
<keyword id="KW-0732">Signal</keyword>
<keyword id="KW-0843">Virulence</keyword>
<keyword id="KW-0862">Zinc</keyword>
<keyword id="KW-0865">Zymogen</keyword>
<feature type="signal peptide" evidence="2">
    <location>
        <begin position="1"/>
        <end position="19"/>
    </location>
</feature>
<feature type="propeptide" id="PRO_0000380838" evidence="1">
    <location>
        <begin position="20"/>
        <end position="246"/>
    </location>
</feature>
<feature type="chain" id="PRO_0000380839" description="Extracellular metalloproteinase 1">
    <location>
        <begin position="247"/>
        <end position="635"/>
    </location>
</feature>
<feature type="active site" evidence="3">
    <location>
        <position position="431"/>
    </location>
</feature>
<feature type="binding site" evidence="3">
    <location>
        <position position="430"/>
    </location>
    <ligand>
        <name>Zn(2+)</name>
        <dbReference type="ChEBI" id="CHEBI:29105"/>
        <note>catalytic</note>
    </ligand>
</feature>
<feature type="binding site" evidence="3">
    <location>
        <position position="434"/>
    </location>
    <ligand>
        <name>Zn(2+)</name>
        <dbReference type="ChEBI" id="CHEBI:29105"/>
        <note>catalytic</note>
    </ligand>
</feature>
<feature type="glycosylation site" description="N-linked (GlcNAc...) asparagine" evidence="2">
    <location>
        <position position="287"/>
    </location>
</feature>
<feature type="glycosylation site" description="N-linked (GlcNAc...) asparagine" evidence="2">
    <location>
        <position position="475"/>
    </location>
</feature>
<feature type="glycosylation site" description="N-linked (GlcNAc...) asparagine" evidence="2">
    <location>
        <position position="594"/>
    </location>
</feature>
<feature type="glycosylation site" description="N-linked (GlcNAc...) asparagine" evidence="2">
    <location>
        <position position="623"/>
    </location>
</feature>
<reference key="1">
    <citation type="submission" date="2008-10" db="EMBL/GenBank/DDBJ databases">
        <title>Comparing putative pathogenicity factors between Trichophyton tonsurans and Trichophyton equinum.</title>
        <authorList>
            <person name="Preuett B.L."/>
            <person name="Abdel-Rahman S.M."/>
        </authorList>
    </citation>
    <scope>NUCLEOTIDE SEQUENCE [GENOMIC DNA]</scope>
</reference>
<name>MEP1_TRITO</name>
<evidence type="ECO:0000250" key="1"/>
<evidence type="ECO:0000255" key="2"/>
<evidence type="ECO:0000255" key="3">
    <source>
        <dbReference type="PROSITE-ProRule" id="PRU10095"/>
    </source>
</evidence>
<evidence type="ECO:0000305" key="4"/>
<proteinExistence type="inferred from homology"/>
<organism>
    <name type="scientific">Trichophyton tonsurans</name>
    <name type="common">Scalp ringworm fungus</name>
    <dbReference type="NCBI Taxonomy" id="34387"/>
    <lineage>
        <taxon>Eukaryota</taxon>
        <taxon>Fungi</taxon>
        <taxon>Dikarya</taxon>
        <taxon>Ascomycota</taxon>
        <taxon>Pezizomycotina</taxon>
        <taxon>Eurotiomycetes</taxon>
        <taxon>Eurotiomycetidae</taxon>
        <taxon>Onygenales</taxon>
        <taxon>Arthrodermataceae</taxon>
        <taxon>Trichophyton</taxon>
    </lineage>
</organism>
<dbReference type="EC" id="3.4.24.-"/>
<dbReference type="EMBL" id="FJ348242">
    <property type="protein sequence ID" value="ACL37332.1"/>
    <property type="molecule type" value="Genomic_DNA"/>
</dbReference>
<dbReference type="SMR" id="B8XGR0"/>
<dbReference type="MEROPS" id="M36.001"/>
<dbReference type="GlyCosmos" id="B8XGR0">
    <property type="glycosylation" value="4 sites, No reported glycans"/>
</dbReference>
<dbReference type="VEuPathDB" id="FungiDB:TESG_07429"/>
<dbReference type="GO" id="GO:0005576">
    <property type="term" value="C:extracellular region"/>
    <property type="evidence" value="ECO:0007669"/>
    <property type="project" value="UniProtKB-SubCell"/>
</dbReference>
<dbReference type="GO" id="GO:0004222">
    <property type="term" value="F:metalloendopeptidase activity"/>
    <property type="evidence" value="ECO:0007669"/>
    <property type="project" value="InterPro"/>
</dbReference>
<dbReference type="GO" id="GO:0008270">
    <property type="term" value="F:zinc ion binding"/>
    <property type="evidence" value="ECO:0007669"/>
    <property type="project" value="InterPro"/>
</dbReference>
<dbReference type="GO" id="GO:0006508">
    <property type="term" value="P:proteolysis"/>
    <property type="evidence" value="ECO:0007669"/>
    <property type="project" value="UniProtKB-KW"/>
</dbReference>
<dbReference type="CDD" id="cd09596">
    <property type="entry name" value="M36"/>
    <property type="match status" value="1"/>
</dbReference>
<dbReference type="Gene3D" id="3.10.170.10">
    <property type="match status" value="1"/>
</dbReference>
<dbReference type="Gene3D" id="1.10.390.10">
    <property type="entry name" value="Neutral Protease Domain 2"/>
    <property type="match status" value="1"/>
</dbReference>
<dbReference type="InterPro" id="IPR011096">
    <property type="entry name" value="FTP_domain"/>
</dbReference>
<dbReference type="InterPro" id="IPR050371">
    <property type="entry name" value="Fungal_virulence_M36"/>
</dbReference>
<dbReference type="InterPro" id="IPR001842">
    <property type="entry name" value="Peptidase_M36"/>
</dbReference>
<dbReference type="InterPro" id="IPR027268">
    <property type="entry name" value="Peptidase_M4/M1_CTD_sf"/>
</dbReference>
<dbReference type="PANTHER" id="PTHR33478">
    <property type="entry name" value="EXTRACELLULAR METALLOPROTEINASE MEP"/>
    <property type="match status" value="1"/>
</dbReference>
<dbReference type="PANTHER" id="PTHR33478:SF1">
    <property type="entry name" value="EXTRACELLULAR METALLOPROTEINASE MEP"/>
    <property type="match status" value="1"/>
</dbReference>
<dbReference type="Pfam" id="PF07504">
    <property type="entry name" value="FTP"/>
    <property type="match status" value="1"/>
</dbReference>
<dbReference type="Pfam" id="PF02128">
    <property type="entry name" value="Peptidase_M36"/>
    <property type="match status" value="1"/>
</dbReference>
<dbReference type="PRINTS" id="PR00999">
    <property type="entry name" value="FUNGALYSIN"/>
</dbReference>
<dbReference type="SUPFAM" id="SSF55486">
    <property type="entry name" value="Metalloproteases ('zincins'), catalytic domain"/>
    <property type="match status" value="1"/>
</dbReference>
<dbReference type="PROSITE" id="PS00142">
    <property type="entry name" value="ZINC_PROTEASE"/>
    <property type="match status" value="1"/>
</dbReference>
<accession>B8XGR0</accession>
<sequence>MHGLLLAAGLLSLPLHVLAHPQPSTSTSLAGRAGAVDLNEFRVAHRSSYTSHDEMKKLPSIASFRQGTYLEVATELVKQTMPNMEFRLVDDHYVGDSGIGHVRFRQTMHGIDIDNSDFNVNVGKDGKILSHGNSFYTGPAPASNPMVKRDFIDPMQALNGVRKALNLPVKANGAHVENMSEHKVMFKGTSGALSDPTAKLCYMAKEDGSLALTWRVETDIGDNWLLSYMDAKESSKVHNVVDYVAHATFQVYKWGLADPTEGKRDILTNPWNLKTSPLTWLADGKTNFTATRGNNAIAQYNPDGGNDYENNYRPSPKNLKFEYPYSPDMNPPKTYIDASVTQLFYTSNVCHDLYYMLGFNEKAGNFQVNNRGQGGKGNDYVILNAQDGSGTNNANFATPPDGQPGRMRAYIWTRANPPRDASFEAGTIIHEYTHGLSNRLCGGPANSRCLNALESGGMGEGWGDFYATAVRLKPNDTRKTNYVKGGWVNNSPKGVRMYPYSTDMNVNPLVYTSNNKLNEVHAIGTVWCTMLYEVLWNLIDKHGKNDGPVPVFENGVPNDGKYLAMKLVMDGMAIQPCNPNFVQARDAILDADMNLTKGANKCEIWKGFAKRGLGVGAKFDPKNRTGSNQVPNECK</sequence>
<protein>
    <recommendedName>
        <fullName>Extracellular metalloproteinase 1</fullName>
        <ecNumber>3.4.24.-</ecNumber>
    </recommendedName>
    <alternativeName>
        <fullName>Fungalysin MEP1</fullName>
    </alternativeName>
</protein>